<reference key="1">
    <citation type="journal article" date="1998" name="Proc. R. Soc. B">
        <title>Analyses of mitochondrial genomes strongly support a hippopotamus-whale clade.</title>
        <authorList>
            <person name="Ursing B.M."/>
            <person name="Arnason U."/>
        </authorList>
    </citation>
    <scope>NUCLEOTIDE SEQUENCE [GENOMIC DNA]</scope>
</reference>
<organism>
    <name type="scientific">Hippopotamus amphibius</name>
    <name type="common">Hippopotamus</name>
    <dbReference type="NCBI Taxonomy" id="9833"/>
    <lineage>
        <taxon>Eukaryota</taxon>
        <taxon>Metazoa</taxon>
        <taxon>Chordata</taxon>
        <taxon>Craniata</taxon>
        <taxon>Vertebrata</taxon>
        <taxon>Euteleostomi</taxon>
        <taxon>Mammalia</taxon>
        <taxon>Eutheria</taxon>
        <taxon>Laurasiatheria</taxon>
        <taxon>Artiodactyla</taxon>
        <taxon>Whippomorpha</taxon>
        <taxon>Ancodonta</taxon>
        <taxon>Hippopotamidae</taxon>
        <taxon>Hippopotamus</taxon>
    </lineage>
</organism>
<accession>Q9ZZY7</accession>
<geneLocation type="mitochondrion"/>
<protein>
    <recommendedName>
        <fullName evidence="1">ATP synthase F(0) complex subunit 8</fullName>
    </recommendedName>
    <alternativeName>
        <fullName>A6L</fullName>
    </alternativeName>
    <alternativeName>
        <fullName>F-ATPase subunit 8</fullName>
    </alternativeName>
</protein>
<gene>
    <name evidence="1" type="primary">MT-ATP8</name>
    <name type="synonym">ATP8</name>
    <name type="synonym">ATPASE8</name>
    <name type="synonym">MTATP8</name>
</gene>
<dbReference type="EMBL" id="AJ010957">
    <property type="protein sequence ID" value="CAA09432.1"/>
    <property type="molecule type" value="Genomic_DNA"/>
</dbReference>
<dbReference type="RefSeq" id="NP_008794.1">
    <property type="nucleotide sequence ID" value="NC_000889.1"/>
</dbReference>
<dbReference type="SMR" id="Q9ZZY7"/>
<dbReference type="GeneID" id="808672"/>
<dbReference type="CTD" id="4509"/>
<dbReference type="GO" id="GO:0031966">
    <property type="term" value="C:mitochondrial membrane"/>
    <property type="evidence" value="ECO:0007669"/>
    <property type="project" value="UniProtKB-SubCell"/>
</dbReference>
<dbReference type="GO" id="GO:0045259">
    <property type="term" value="C:proton-transporting ATP synthase complex"/>
    <property type="evidence" value="ECO:0000250"/>
    <property type="project" value="UniProtKB"/>
</dbReference>
<dbReference type="GO" id="GO:0015078">
    <property type="term" value="F:proton transmembrane transporter activity"/>
    <property type="evidence" value="ECO:0007669"/>
    <property type="project" value="InterPro"/>
</dbReference>
<dbReference type="GO" id="GO:0015986">
    <property type="term" value="P:proton motive force-driven ATP synthesis"/>
    <property type="evidence" value="ECO:0007669"/>
    <property type="project" value="InterPro"/>
</dbReference>
<dbReference type="InterPro" id="IPR039017">
    <property type="entry name" value="ATP8_mammal"/>
</dbReference>
<dbReference type="InterPro" id="IPR001421">
    <property type="entry name" value="ATP8_metazoa"/>
</dbReference>
<dbReference type="PANTHER" id="PTHR13722">
    <property type="entry name" value="ATP SYNTHASE PROTEIN 8"/>
    <property type="match status" value="1"/>
</dbReference>
<dbReference type="PANTHER" id="PTHR13722:SF0">
    <property type="entry name" value="ATP SYNTHASE PROTEIN 8"/>
    <property type="match status" value="1"/>
</dbReference>
<dbReference type="Pfam" id="PF00895">
    <property type="entry name" value="ATP-synt_8"/>
    <property type="match status" value="1"/>
</dbReference>
<comment type="function">
    <text evidence="1 3">Subunit 8, of the mitochondrial membrane ATP synthase complex (F(1)F(0) ATP synthase or Complex V) that produces ATP from ADP in the presence of a proton gradient across the membrane which is generated by electron transport complexes of the respiratory chain. ATP synthase complex consist of a soluble F(1) head domain - the catalytic core - and a membrane F(1) domain - the membrane proton channel. These two domains are linked by a central stalk rotating inside the F(1) region and a stationary peripheral stalk. During catalysis, ATP synthesis in the catalytic domain of F(1) is coupled via a rotary mechanism of the central stalk subunits to proton translocation (By similarity). In vivo, can only synthesize ATP although its ATP hydrolase activity can be activated artificially in vitro (By similarity). Part of the complex F(0) domain (By similarity).</text>
</comment>
<comment type="subunit">
    <text evidence="1">Component of the ATP synthase complex composed at least of ATP5F1A/subunit alpha, ATP5F1B/subunit beta, ATP5MC1/subunit c (homooctomer), MT-ATP6/subunit a, MT-ATP8/subunit 8, ATP5ME/subunit e, ATP5MF/subunit f, ATP5MG/subunit g, ATP5MK/subunit k, ATP5MJ/subunit j, ATP5F1C/subunit gamma, ATP5F1D/subunit delta, ATP5F1E/subunit epsilon, ATP5PF/subunit F6, ATP5PB/subunit b, ATP5PD/subunit d, ATP5PO/subunit OSCP. ATP synthase complex consists of a soluble F(1) head domain (subunits alpha(3) and beta(3)) - the catalytic core - and a membrane F(0) domain - the membrane proton channel (subunits c, a, 8, e, f, g, k and j). These two domains are linked by a central stalk (subunits gamma, delta, and epsilon) rotating inside the F1 region and a stationary peripheral stalk (subunits F6, b, d, and OSCP). Interacts with PRICKLE3.</text>
</comment>
<comment type="subcellular location">
    <subcellularLocation>
        <location>Mitochondrion membrane</location>
        <topology>Single-pass membrane protein</topology>
    </subcellularLocation>
</comment>
<comment type="similarity">
    <text evidence="5">Belongs to the ATPase protein 8 family.</text>
</comment>
<feature type="chain" id="PRO_0000195534" description="ATP synthase F(0) complex subunit 8">
    <location>
        <begin position="1"/>
        <end position="68"/>
    </location>
</feature>
<feature type="transmembrane region" description="Helical" evidence="4">
    <location>
        <begin position="8"/>
        <end position="24"/>
    </location>
</feature>
<feature type="modified residue" description="N6-acetyllysine; alternate" evidence="2">
    <location>
        <position position="54"/>
    </location>
</feature>
<feature type="modified residue" description="N6-succinyllysine; alternate" evidence="2">
    <location>
        <position position="54"/>
    </location>
</feature>
<feature type="modified residue" description="N6-acetyllysine" evidence="2">
    <location>
        <position position="57"/>
    </location>
</feature>
<sequence length="68" mass="8025">MPQLDTSTWFTTILSMFLTLFIIFQLKISKHTYHPNPETTLPMTQKQPTPWETKWTKIYSPLSLPLQS</sequence>
<keyword id="KW-0007">Acetylation</keyword>
<keyword id="KW-0066">ATP synthesis</keyword>
<keyword id="KW-0138">CF(0)</keyword>
<keyword id="KW-0375">Hydrogen ion transport</keyword>
<keyword id="KW-0406">Ion transport</keyword>
<keyword id="KW-0472">Membrane</keyword>
<keyword id="KW-0496">Mitochondrion</keyword>
<keyword id="KW-0812">Transmembrane</keyword>
<keyword id="KW-1133">Transmembrane helix</keyword>
<keyword id="KW-0813">Transport</keyword>
<evidence type="ECO:0000250" key="1">
    <source>
        <dbReference type="UniProtKB" id="P03928"/>
    </source>
</evidence>
<evidence type="ECO:0000250" key="2">
    <source>
        <dbReference type="UniProtKB" id="P03930"/>
    </source>
</evidence>
<evidence type="ECO:0000250" key="3">
    <source>
        <dbReference type="UniProtKB" id="P19483"/>
    </source>
</evidence>
<evidence type="ECO:0000255" key="4"/>
<evidence type="ECO:0000305" key="5"/>
<name>ATP8_HIPAM</name>
<proteinExistence type="inferred from homology"/>